<name>GLGB_SALTI</name>
<reference key="1">
    <citation type="journal article" date="2001" name="Nature">
        <title>Complete genome sequence of a multiple drug resistant Salmonella enterica serovar Typhi CT18.</title>
        <authorList>
            <person name="Parkhill J."/>
            <person name="Dougan G."/>
            <person name="James K.D."/>
            <person name="Thomson N.R."/>
            <person name="Pickard D."/>
            <person name="Wain J."/>
            <person name="Churcher C.M."/>
            <person name="Mungall K.L."/>
            <person name="Bentley S.D."/>
            <person name="Holden M.T.G."/>
            <person name="Sebaihia M."/>
            <person name="Baker S."/>
            <person name="Basham D."/>
            <person name="Brooks K."/>
            <person name="Chillingworth T."/>
            <person name="Connerton P."/>
            <person name="Cronin A."/>
            <person name="Davis P."/>
            <person name="Davies R.M."/>
            <person name="Dowd L."/>
            <person name="White N."/>
            <person name="Farrar J."/>
            <person name="Feltwell T."/>
            <person name="Hamlin N."/>
            <person name="Haque A."/>
            <person name="Hien T.T."/>
            <person name="Holroyd S."/>
            <person name="Jagels K."/>
            <person name="Krogh A."/>
            <person name="Larsen T.S."/>
            <person name="Leather S."/>
            <person name="Moule S."/>
            <person name="O'Gaora P."/>
            <person name="Parry C."/>
            <person name="Quail M.A."/>
            <person name="Rutherford K.M."/>
            <person name="Simmonds M."/>
            <person name="Skelton J."/>
            <person name="Stevens K."/>
            <person name="Whitehead S."/>
            <person name="Barrell B.G."/>
        </authorList>
    </citation>
    <scope>NUCLEOTIDE SEQUENCE [LARGE SCALE GENOMIC DNA]</scope>
    <source>
        <strain>CT18</strain>
    </source>
</reference>
<reference key="2">
    <citation type="journal article" date="2003" name="J. Bacteriol.">
        <title>Comparative genomics of Salmonella enterica serovar Typhi strains Ty2 and CT18.</title>
        <authorList>
            <person name="Deng W."/>
            <person name="Liou S.-R."/>
            <person name="Plunkett G. III"/>
            <person name="Mayhew G.F."/>
            <person name="Rose D.J."/>
            <person name="Burland V."/>
            <person name="Kodoyianni V."/>
            <person name="Schwartz D.C."/>
            <person name="Blattner F.R."/>
        </authorList>
    </citation>
    <scope>NUCLEOTIDE SEQUENCE [LARGE SCALE GENOMIC DNA]</scope>
    <source>
        <strain>ATCC 700931 / Ty2</strain>
    </source>
</reference>
<organism>
    <name type="scientific">Salmonella typhi</name>
    <dbReference type="NCBI Taxonomy" id="90370"/>
    <lineage>
        <taxon>Bacteria</taxon>
        <taxon>Pseudomonadati</taxon>
        <taxon>Pseudomonadota</taxon>
        <taxon>Gammaproteobacteria</taxon>
        <taxon>Enterobacterales</taxon>
        <taxon>Enterobacteriaceae</taxon>
        <taxon>Salmonella</taxon>
    </lineage>
</organism>
<feature type="chain" id="PRO_0000188740" description="1,4-alpha-glucan branching enzyme GlgB">
    <location>
        <begin position="1"/>
        <end position="728"/>
    </location>
</feature>
<feature type="active site" description="Nucleophile" evidence="1">
    <location>
        <position position="405"/>
    </location>
</feature>
<feature type="active site" description="Proton donor" evidence="1">
    <location>
        <position position="458"/>
    </location>
</feature>
<sequence length="728" mass="84305">MSSRIDRDVINALIAGHFADPFSVLGMHQTQAGLEVRALLPDATDVWVIEPKTGRKVGKLECLDARGFFCGVLPRRKNFFRYQLAVTWHGQQNLIDDPYRFGPLIQEMDAWLLSEGTHLRPYETLGAHADTMDGVTGTRFSVWAPNARRVSVVGQFNYWDGRRHPMRLRKESGIWELFIPGAHNGQLYKFELLDANGNLRIKADPYAFEAQMRPETASMICGLPEKVTPSEERQKANQFDAPISIYEVHLGSWRRHTDNNFWLSYRELADQLVPYAKWMGFTHLELLPVNEHPFDGSWGYQPTGLYAPTRRFGTRDDFRYFINAAHAAGLNVILDWVPGHFPSDEFSLAEFDGTHLYEHSDPREGYHQDWNTLIYNYGRREVSNYLVGNALYWMERFGIDALRVDAVASMIYRDYSRKEGEWIPNEFGGRENLEAIEFLRNTNRIIGEQVPGAVSMAEESTDFSGVTRPPETGGLGFWYKWNLGWMHDTLDYMKLDPVYRQYHHDKLTFGMLYNHTENFVLPLSHDEVVHGKKSILDRMPGDAWQKFANLRAYYGWMWAFPGKKLLFMGNEFAQGREWNHDASLDWHLLEGGDNWHHGVQRLVRDLNHTYRHHKALHELDFDAYGFEWLVVDDNERSVLIFVRRDKAGNEIIVASNFTPVPRHDYRFGINQPGRWREILNTDSMHYHGSNTGNGGVVHSDEIESHGRQHSLNLTLPPLATIWLMREGE</sequence>
<dbReference type="EC" id="2.4.1.18" evidence="1"/>
<dbReference type="EMBL" id="AL513382">
    <property type="protein sequence ID" value="CAD08090.1"/>
    <property type="molecule type" value="Genomic_DNA"/>
</dbReference>
<dbReference type="EMBL" id="AE014613">
    <property type="protein sequence ID" value="AAO71452.1"/>
    <property type="molecule type" value="Genomic_DNA"/>
</dbReference>
<dbReference type="RefSeq" id="NP_458380.1">
    <property type="nucleotide sequence ID" value="NC_003198.1"/>
</dbReference>
<dbReference type="RefSeq" id="WP_000098552.1">
    <property type="nucleotide sequence ID" value="NZ_WSUR01000001.1"/>
</dbReference>
<dbReference type="SMR" id="Q8Z235"/>
<dbReference type="STRING" id="220341.gene:17588103"/>
<dbReference type="KEGG" id="stt:t3982"/>
<dbReference type="KEGG" id="sty:STY4272"/>
<dbReference type="PATRIC" id="fig|220341.7.peg.4365"/>
<dbReference type="eggNOG" id="COG0296">
    <property type="taxonomic scope" value="Bacteria"/>
</dbReference>
<dbReference type="HOGENOM" id="CLU_004245_3_2_6"/>
<dbReference type="OMA" id="YEMHLGS"/>
<dbReference type="OrthoDB" id="9800174at2"/>
<dbReference type="UniPathway" id="UPA00164"/>
<dbReference type="Proteomes" id="UP000000541">
    <property type="component" value="Chromosome"/>
</dbReference>
<dbReference type="Proteomes" id="UP000002670">
    <property type="component" value="Chromosome"/>
</dbReference>
<dbReference type="GO" id="GO:0005829">
    <property type="term" value="C:cytosol"/>
    <property type="evidence" value="ECO:0007669"/>
    <property type="project" value="TreeGrafter"/>
</dbReference>
<dbReference type="GO" id="GO:0003844">
    <property type="term" value="F:1,4-alpha-glucan branching enzyme activity"/>
    <property type="evidence" value="ECO:0007669"/>
    <property type="project" value="UniProtKB-UniRule"/>
</dbReference>
<dbReference type="GO" id="GO:0043169">
    <property type="term" value="F:cation binding"/>
    <property type="evidence" value="ECO:0007669"/>
    <property type="project" value="InterPro"/>
</dbReference>
<dbReference type="GO" id="GO:0004553">
    <property type="term" value="F:hydrolase activity, hydrolyzing O-glycosyl compounds"/>
    <property type="evidence" value="ECO:0007669"/>
    <property type="project" value="InterPro"/>
</dbReference>
<dbReference type="GO" id="GO:0005978">
    <property type="term" value="P:glycogen biosynthetic process"/>
    <property type="evidence" value="ECO:0007669"/>
    <property type="project" value="UniProtKB-UniRule"/>
</dbReference>
<dbReference type="CDD" id="cd11322">
    <property type="entry name" value="AmyAc_Glg_BE"/>
    <property type="match status" value="1"/>
</dbReference>
<dbReference type="CDD" id="cd02855">
    <property type="entry name" value="E_set_GBE_prok_N"/>
    <property type="match status" value="1"/>
</dbReference>
<dbReference type="FunFam" id="2.60.40.10:FF:000169">
    <property type="entry name" value="1,4-alpha-glucan branching enzyme GlgB"/>
    <property type="match status" value="1"/>
</dbReference>
<dbReference type="FunFam" id="2.60.40.10:FF:000331">
    <property type="entry name" value="1,4-alpha-glucan branching enzyme GlgB"/>
    <property type="match status" value="1"/>
</dbReference>
<dbReference type="FunFam" id="2.60.40.1180:FF:000002">
    <property type="entry name" value="1,4-alpha-glucan branching enzyme GlgB"/>
    <property type="match status" value="1"/>
</dbReference>
<dbReference type="FunFam" id="3.20.20.80:FF:000003">
    <property type="entry name" value="1,4-alpha-glucan branching enzyme GlgB"/>
    <property type="match status" value="1"/>
</dbReference>
<dbReference type="Gene3D" id="3.20.20.80">
    <property type="entry name" value="Glycosidases"/>
    <property type="match status" value="1"/>
</dbReference>
<dbReference type="Gene3D" id="2.60.40.1180">
    <property type="entry name" value="Golgi alpha-mannosidase II"/>
    <property type="match status" value="1"/>
</dbReference>
<dbReference type="Gene3D" id="2.60.40.10">
    <property type="entry name" value="Immunoglobulins"/>
    <property type="match status" value="2"/>
</dbReference>
<dbReference type="HAMAP" id="MF_00685">
    <property type="entry name" value="GlgB"/>
    <property type="match status" value="1"/>
</dbReference>
<dbReference type="InterPro" id="IPR006048">
    <property type="entry name" value="A-amylase/branching_C"/>
</dbReference>
<dbReference type="InterPro" id="IPR037439">
    <property type="entry name" value="Branching_enzy"/>
</dbReference>
<dbReference type="InterPro" id="IPR006407">
    <property type="entry name" value="GlgB"/>
</dbReference>
<dbReference type="InterPro" id="IPR054169">
    <property type="entry name" value="GlgB_N"/>
</dbReference>
<dbReference type="InterPro" id="IPR044143">
    <property type="entry name" value="GlgB_N_E_set_prok"/>
</dbReference>
<dbReference type="InterPro" id="IPR006047">
    <property type="entry name" value="Glyco_hydro_13_cat_dom"/>
</dbReference>
<dbReference type="InterPro" id="IPR004193">
    <property type="entry name" value="Glyco_hydro_13_N"/>
</dbReference>
<dbReference type="InterPro" id="IPR013780">
    <property type="entry name" value="Glyco_hydro_b"/>
</dbReference>
<dbReference type="InterPro" id="IPR017853">
    <property type="entry name" value="Glycoside_hydrolase_SF"/>
</dbReference>
<dbReference type="InterPro" id="IPR013783">
    <property type="entry name" value="Ig-like_fold"/>
</dbReference>
<dbReference type="InterPro" id="IPR014756">
    <property type="entry name" value="Ig_E-set"/>
</dbReference>
<dbReference type="NCBIfam" id="TIGR01515">
    <property type="entry name" value="branching_enzym"/>
    <property type="match status" value="1"/>
</dbReference>
<dbReference type="NCBIfam" id="NF003811">
    <property type="entry name" value="PRK05402.1"/>
    <property type="match status" value="1"/>
</dbReference>
<dbReference type="NCBIfam" id="NF008967">
    <property type="entry name" value="PRK12313.1"/>
    <property type="match status" value="1"/>
</dbReference>
<dbReference type="PANTHER" id="PTHR43651">
    <property type="entry name" value="1,4-ALPHA-GLUCAN-BRANCHING ENZYME"/>
    <property type="match status" value="1"/>
</dbReference>
<dbReference type="PANTHER" id="PTHR43651:SF3">
    <property type="entry name" value="1,4-ALPHA-GLUCAN-BRANCHING ENZYME"/>
    <property type="match status" value="1"/>
</dbReference>
<dbReference type="Pfam" id="PF00128">
    <property type="entry name" value="Alpha-amylase"/>
    <property type="match status" value="1"/>
</dbReference>
<dbReference type="Pfam" id="PF02806">
    <property type="entry name" value="Alpha-amylase_C"/>
    <property type="match status" value="1"/>
</dbReference>
<dbReference type="Pfam" id="PF02922">
    <property type="entry name" value="CBM_48"/>
    <property type="match status" value="1"/>
</dbReference>
<dbReference type="Pfam" id="PF22019">
    <property type="entry name" value="GlgB_N"/>
    <property type="match status" value="1"/>
</dbReference>
<dbReference type="PIRSF" id="PIRSF000463">
    <property type="entry name" value="GlgB"/>
    <property type="match status" value="1"/>
</dbReference>
<dbReference type="SMART" id="SM00642">
    <property type="entry name" value="Aamy"/>
    <property type="match status" value="1"/>
</dbReference>
<dbReference type="SUPFAM" id="SSF51445">
    <property type="entry name" value="(Trans)glycosidases"/>
    <property type="match status" value="1"/>
</dbReference>
<dbReference type="SUPFAM" id="SSF81296">
    <property type="entry name" value="E set domains"/>
    <property type="match status" value="2"/>
</dbReference>
<dbReference type="SUPFAM" id="SSF51011">
    <property type="entry name" value="Glycosyl hydrolase domain"/>
    <property type="match status" value="1"/>
</dbReference>
<keyword id="KW-0119">Carbohydrate metabolism</keyword>
<keyword id="KW-0320">Glycogen biosynthesis</keyword>
<keyword id="KW-0321">Glycogen metabolism</keyword>
<keyword id="KW-0328">Glycosyltransferase</keyword>
<keyword id="KW-0808">Transferase</keyword>
<comment type="function">
    <text evidence="1">Catalyzes the formation of the alpha-1,6-glucosidic linkages in glycogen by scission of a 1,4-alpha-linked oligosaccharide from growing alpha-1,4-glucan chains and the subsequent attachment of the oligosaccharide to the alpha-1,6 position.</text>
</comment>
<comment type="catalytic activity">
    <reaction evidence="1">
        <text>Transfers a segment of a (1-&gt;4)-alpha-D-glucan chain to a primary hydroxy group in a similar glucan chain.</text>
        <dbReference type="EC" id="2.4.1.18"/>
    </reaction>
</comment>
<comment type="pathway">
    <text evidence="1">Glycan biosynthesis; glycogen biosynthesis.</text>
</comment>
<comment type="subunit">
    <text evidence="1">Monomer.</text>
</comment>
<comment type="similarity">
    <text evidence="1">Belongs to the glycosyl hydrolase 13 family. GlgB subfamily.</text>
</comment>
<accession>Q8Z235</accession>
<evidence type="ECO:0000255" key="1">
    <source>
        <dbReference type="HAMAP-Rule" id="MF_00685"/>
    </source>
</evidence>
<gene>
    <name evidence="1" type="primary">glgB</name>
    <name type="ordered locus">STY4272</name>
    <name type="ordered locus">t3982</name>
</gene>
<protein>
    <recommendedName>
        <fullName evidence="1">1,4-alpha-glucan branching enzyme GlgB</fullName>
        <ecNumber evidence="1">2.4.1.18</ecNumber>
    </recommendedName>
    <alternativeName>
        <fullName evidence="1">1,4-alpha-D-glucan:1,4-alpha-D-glucan 6-glucosyl-transferase</fullName>
    </alternativeName>
    <alternativeName>
        <fullName evidence="1">Alpha-(1-&gt;4)-glucan branching enzyme</fullName>
    </alternativeName>
    <alternativeName>
        <fullName evidence="1">Glycogen branching enzyme</fullName>
        <shortName evidence="1">BE</shortName>
    </alternativeName>
</protein>
<proteinExistence type="inferred from homology"/>